<accession>Q63DH5</accession>
<keyword id="KW-0131">Cell cycle</keyword>
<keyword id="KW-0132">Cell division</keyword>
<keyword id="KW-0133">Cell shape</keyword>
<keyword id="KW-0175">Coiled coil</keyword>
<keyword id="KW-0963">Cytoplasm</keyword>
<reference key="1">
    <citation type="journal article" date="2006" name="J. Bacteriol.">
        <title>Pathogenomic sequence analysis of Bacillus cereus and Bacillus thuringiensis isolates closely related to Bacillus anthracis.</title>
        <authorList>
            <person name="Han C.S."/>
            <person name="Xie G."/>
            <person name="Challacombe J.F."/>
            <person name="Altherr M.R."/>
            <person name="Bhotika S.S."/>
            <person name="Bruce D."/>
            <person name="Campbell C.S."/>
            <person name="Campbell M.L."/>
            <person name="Chen J."/>
            <person name="Chertkov O."/>
            <person name="Cleland C."/>
            <person name="Dimitrijevic M."/>
            <person name="Doggett N.A."/>
            <person name="Fawcett J.J."/>
            <person name="Glavina T."/>
            <person name="Goodwin L.A."/>
            <person name="Hill K.K."/>
            <person name="Hitchcock P."/>
            <person name="Jackson P.J."/>
            <person name="Keim P."/>
            <person name="Kewalramani A.R."/>
            <person name="Longmire J."/>
            <person name="Lucas S."/>
            <person name="Malfatti S."/>
            <person name="McMurry K."/>
            <person name="Meincke L.J."/>
            <person name="Misra M."/>
            <person name="Moseman B.L."/>
            <person name="Mundt M."/>
            <person name="Munk A.C."/>
            <person name="Okinaka R.T."/>
            <person name="Parson-Quintana B."/>
            <person name="Reilly L.P."/>
            <person name="Richardson P."/>
            <person name="Robinson D.L."/>
            <person name="Rubin E."/>
            <person name="Saunders E."/>
            <person name="Tapia R."/>
            <person name="Tesmer J.G."/>
            <person name="Thayer N."/>
            <person name="Thompson L.S."/>
            <person name="Tice H."/>
            <person name="Ticknor L.O."/>
            <person name="Wills P.L."/>
            <person name="Brettin T.S."/>
            <person name="Gilna P."/>
        </authorList>
    </citation>
    <scope>NUCLEOTIDE SEQUENCE [LARGE SCALE GENOMIC DNA]</scope>
    <source>
        <strain>ZK / E33L</strain>
    </source>
</reference>
<sequence>MISDKIKLTAKDILEKEFKTGMRGYQQEEVDKFLDMIIKDYEAFHKEFEQLKQQNARLKRELEEQKLVATQVPQQPVVQTPVAQPVYNNTNTDILKRLSNLEKAVFGSKLYE</sequence>
<protein>
    <recommendedName>
        <fullName evidence="1">Cell cycle protein GpsB</fullName>
    </recommendedName>
    <alternativeName>
        <fullName evidence="1">Guiding PBP1-shuttling protein</fullName>
    </alternativeName>
</protein>
<comment type="function">
    <text evidence="1">Divisome component that associates with the complex late in its assembly, after the Z-ring is formed, and is dependent on DivIC and PBP2B for its recruitment to the divisome. Together with EzrA, is a key component of the system that regulates PBP1 localization during cell cycle progression. Its main role could be the removal of PBP1 from the cell pole after pole maturation is completed. Also contributes to the recruitment of PBP1 to the division complex. Not essential for septum formation.</text>
</comment>
<comment type="subunit">
    <text evidence="1">Forms polymers through the coiled coil domains. Interacts with PBP1, MreC and EzrA.</text>
</comment>
<comment type="subcellular location">
    <subcellularLocation>
        <location evidence="1">Cytoplasm</location>
    </subcellularLocation>
    <text evidence="1">Shuttles between the lateral wall and the division site in a cell cycle-dependent manner.</text>
</comment>
<comment type="similarity">
    <text evidence="1">Belongs to the GpsB family.</text>
</comment>
<evidence type="ECO:0000255" key="1">
    <source>
        <dbReference type="HAMAP-Rule" id="MF_02011"/>
    </source>
</evidence>
<gene>
    <name evidence="1" type="primary">gpsB</name>
    <name type="ordered locus">BCE33L1440</name>
</gene>
<organism>
    <name type="scientific">Bacillus cereus (strain ZK / E33L)</name>
    <dbReference type="NCBI Taxonomy" id="288681"/>
    <lineage>
        <taxon>Bacteria</taxon>
        <taxon>Bacillati</taxon>
        <taxon>Bacillota</taxon>
        <taxon>Bacilli</taxon>
        <taxon>Bacillales</taxon>
        <taxon>Bacillaceae</taxon>
        <taxon>Bacillus</taxon>
        <taxon>Bacillus cereus group</taxon>
    </lineage>
</organism>
<feature type="chain" id="PRO_0000337909" description="Cell cycle protein GpsB">
    <location>
        <begin position="1"/>
        <end position="112"/>
    </location>
</feature>
<feature type="coiled-coil region" evidence="1">
    <location>
        <begin position="38"/>
        <end position="72"/>
    </location>
</feature>
<name>GPSB_BACCZ</name>
<dbReference type="EMBL" id="CP000001">
    <property type="protein sequence ID" value="AAU18812.1"/>
    <property type="molecule type" value="Genomic_DNA"/>
</dbReference>
<dbReference type="RefSeq" id="WP_000622433.1">
    <property type="nucleotide sequence ID" value="NZ_CP009968.1"/>
</dbReference>
<dbReference type="SMR" id="Q63DH5"/>
<dbReference type="GeneID" id="83635170"/>
<dbReference type="KEGG" id="bcz:BCE33L1440"/>
<dbReference type="PATRIC" id="fig|288681.22.peg.4111"/>
<dbReference type="Proteomes" id="UP000002612">
    <property type="component" value="Chromosome"/>
</dbReference>
<dbReference type="GO" id="GO:0005737">
    <property type="term" value="C:cytoplasm"/>
    <property type="evidence" value="ECO:0007669"/>
    <property type="project" value="UniProtKB-SubCell"/>
</dbReference>
<dbReference type="GO" id="GO:0051301">
    <property type="term" value="P:cell division"/>
    <property type="evidence" value="ECO:0007669"/>
    <property type="project" value="UniProtKB-UniRule"/>
</dbReference>
<dbReference type="GO" id="GO:0008360">
    <property type="term" value="P:regulation of cell shape"/>
    <property type="evidence" value="ECO:0007669"/>
    <property type="project" value="UniProtKB-UniRule"/>
</dbReference>
<dbReference type="Gene3D" id="6.10.250.660">
    <property type="match status" value="1"/>
</dbReference>
<dbReference type="HAMAP" id="MF_02011">
    <property type="entry name" value="GpsB"/>
    <property type="match status" value="1"/>
</dbReference>
<dbReference type="InterPro" id="IPR011229">
    <property type="entry name" value="Cell_cycle_GpsB"/>
</dbReference>
<dbReference type="InterPro" id="IPR019933">
    <property type="entry name" value="DivIVA_domain"/>
</dbReference>
<dbReference type="InterPro" id="IPR007793">
    <property type="entry name" value="DivIVA_fam"/>
</dbReference>
<dbReference type="NCBIfam" id="TIGR03544">
    <property type="entry name" value="DivI1A_domain"/>
    <property type="match status" value="1"/>
</dbReference>
<dbReference type="NCBIfam" id="NF010725">
    <property type="entry name" value="PRK14127.1"/>
    <property type="match status" value="1"/>
</dbReference>
<dbReference type="PANTHER" id="PTHR35794:SF1">
    <property type="entry name" value="CELL CYCLE PROTEIN GPSB"/>
    <property type="match status" value="1"/>
</dbReference>
<dbReference type="PANTHER" id="PTHR35794">
    <property type="entry name" value="CELL DIVISION PROTEIN DIVIVA"/>
    <property type="match status" value="1"/>
</dbReference>
<dbReference type="Pfam" id="PF05103">
    <property type="entry name" value="DivIVA"/>
    <property type="match status" value="1"/>
</dbReference>
<dbReference type="PIRSF" id="PIRSF029938">
    <property type="entry name" value="UCP029938"/>
    <property type="match status" value="1"/>
</dbReference>
<proteinExistence type="inferred from homology"/>